<comment type="function">
    <text evidence="1">Cell surface-associated calcium-binding protein which plays an important role in adhesion and pathogenesis. Mediates interactions with components of the extracellular matrix such as host DSG1 to promote bacterial adhesion to host cells. Contributes to the resistance to killing by innate immune components such as neutrophils present in blood and thus attenuates bacterial clearance.</text>
</comment>
<comment type="subunit">
    <text evidence="1">Interacts with host DSG1; this interaction increases S.aureus adherence to keratinocytes.</text>
</comment>
<comment type="subcellular location">
    <subcellularLocation>
        <location evidence="3">Secreted</location>
        <location evidence="3">Cell wall</location>
        <topology evidence="3">Peptidoglycan-anchor</topology>
    </subcellularLocation>
    <text evidence="1">Anchored to the cell wall by sortase A (By similarity).</text>
</comment>
<comment type="similarity">
    <text evidence="5">Belongs to the serine-aspartate repeat-containing protein (SDr) family.</text>
</comment>
<name>SDRD_STAAS</name>
<protein>
    <recommendedName>
        <fullName>Serine-aspartate repeat-containing protein D</fullName>
    </recommendedName>
</protein>
<accession>Q6GBS5</accession>
<feature type="signal peptide" evidence="2">
    <location>
        <begin position="1"/>
        <end position="35"/>
    </location>
</feature>
<feature type="chain" id="PRO_0000281212" description="Serine-aspartate repeat-containing protein D">
    <location>
        <begin position="36"/>
        <end position="1331"/>
    </location>
</feature>
<feature type="propeptide" id="PRO_0000281213" description="Removed by sortase" evidence="3">
    <location>
        <begin position="1332"/>
        <end position="1365"/>
    </location>
</feature>
<feature type="domain" description="CNA-B 1">
    <location>
        <begin position="569"/>
        <end position="680"/>
    </location>
</feature>
<feature type="domain" description="CNA-B 2">
    <location>
        <begin position="681"/>
        <end position="791"/>
    </location>
</feature>
<feature type="domain" description="CNA-B 3">
    <location>
        <begin position="792"/>
        <end position="901"/>
    </location>
</feature>
<feature type="domain" description="CNA-B 4">
    <location>
        <begin position="902"/>
        <end position="1012"/>
    </location>
</feature>
<feature type="domain" description="CNA-B 5">
    <location>
        <begin position="1013"/>
        <end position="1123"/>
    </location>
</feature>
<feature type="region of interest" description="Ligand binding A region">
    <location>
        <begin position="36"/>
        <end position="568"/>
    </location>
</feature>
<feature type="region of interest" description="Disordered" evidence="4">
    <location>
        <begin position="54"/>
        <end position="185"/>
    </location>
</feature>
<feature type="region of interest" description="Disordered" evidence="4">
    <location>
        <begin position="857"/>
        <end position="884"/>
    </location>
</feature>
<feature type="region of interest" description="Disordered" evidence="4">
    <location>
        <begin position="972"/>
        <end position="991"/>
    </location>
</feature>
<feature type="region of interest" description="Disordered" evidence="4">
    <location>
        <begin position="1078"/>
        <end position="1341"/>
    </location>
</feature>
<feature type="short sequence motif" description="YSIRK-G/S signaling motif" evidence="1">
    <location>
        <begin position="23"/>
        <end position="34"/>
    </location>
</feature>
<feature type="short sequence motif" description="LPXTG sorting signal" evidence="3">
    <location>
        <begin position="1328"/>
        <end position="1332"/>
    </location>
</feature>
<feature type="compositionally biased region" description="Polar residues" evidence="4">
    <location>
        <begin position="62"/>
        <end position="71"/>
    </location>
</feature>
<feature type="compositionally biased region" description="Polar residues" evidence="4">
    <location>
        <begin position="94"/>
        <end position="109"/>
    </location>
</feature>
<feature type="compositionally biased region" description="Basic and acidic residues" evidence="4">
    <location>
        <begin position="130"/>
        <end position="145"/>
    </location>
</feature>
<feature type="compositionally biased region" description="Polar residues" evidence="4">
    <location>
        <begin position="146"/>
        <end position="155"/>
    </location>
</feature>
<feature type="compositionally biased region" description="Polar residues" evidence="4">
    <location>
        <begin position="163"/>
        <end position="173"/>
    </location>
</feature>
<feature type="compositionally biased region" description="Basic and acidic residues" evidence="4">
    <location>
        <begin position="174"/>
        <end position="183"/>
    </location>
</feature>
<feature type="compositionally biased region" description="Polar residues" evidence="4">
    <location>
        <begin position="860"/>
        <end position="869"/>
    </location>
</feature>
<feature type="compositionally biased region" description="Polar residues" evidence="4">
    <location>
        <begin position="972"/>
        <end position="981"/>
    </location>
</feature>
<feature type="compositionally biased region" description="Acidic residues" evidence="4">
    <location>
        <begin position="1091"/>
        <end position="1101"/>
    </location>
</feature>
<feature type="compositionally biased region" description="Acidic residues" evidence="4">
    <location>
        <begin position="1118"/>
        <end position="1304"/>
    </location>
</feature>
<feature type="modified residue" description="Pentaglycyl murein peptidoglycan amidated threonine" evidence="3">
    <location>
        <position position="1331"/>
    </location>
</feature>
<evidence type="ECO:0000250" key="1">
    <source>
        <dbReference type="UniProtKB" id="Q2G0L4"/>
    </source>
</evidence>
<evidence type="ECO:0000255" key="2"/>
<evidence type="ECO:0000255" key="3">
    <source>
        <dbReference type="PROSITE-ProRule" id="PRU00477"/>
    </source>
</evidence>
<evidence type="ECO:0000256" key="4">
    <source>
        <dbReference type="SAM" id="MobiDB-lite"/>
    </source>
</evidence>
<evidence type="ECO:0000305" key="5"/>
<organism>
    <name type="scientific">Staphylococcus aureus (strain MSSA476)</name>
    <dbReference type="NCBI Taxonomy" id="282459"/>
    <lineage>
        <taxon>Bacteria</taxon>
        <taxon>Bacillati</taxon>
        <taxon>Bacillota</taxon>
        <taxon>Bacilli</taxon>
        <taxon>Bacillales</taxon>
        <taxon>Staphylococcaceae</taxon>
        <taxon>Staphylococcus</taxon>
    </lineage>
</organism>
<sequence>MLNRENKTAITRKGMVSNRLNKFSIRKYTVGTASILVGTTLIFGLGNQEAKAAESTNKELNEATTSASDNQSSDKVDMQQLNQEDNTKNDNQKEMVSSQGNETTSNGNKSIEKESVQSTTGNKVEVSTAKSDEQASPKSTNEDLNTKQTISNQEALQPDLQENKSVVNAQPTNEENKKVDAKTESTTLNVKSDAIKSNAETLVDNNSNSNNENNADIILPKSTAPKRLNTRMRIAAVQPSSTEAKNVNDLITSNTTLTVVDADKNNKIVPAQDYLELKSQIKVDDKVKSGDYFTIKYSDTVQVYGLNPEDIKNIGDIKDPNNGETIATAKHDTANNLITYTFTDYVDRFNSVQMGINYSIYMDADTIPVSKNDVEFNVTIGNTTTKTTANIQYPDYVVNEKNSIGSAFTETVSHVGNKENPGYYKQTIYVNPSENSLTNAKLKVQAYHSSYPNNIGQINKEVTDIKIYQVPKGYTLNKGYDVNTKELTDVTNQYLQKITYGDNNSAVIDFGNADSAYVVMVNTKFQYTTSESPTLVQMVTLSSNNSKSASMGNALGFTNNQSGGAGQEVYKIGNYVWEDTNKNGVQELGEKGVGNVTVTVFDNNTNTKVGEAVTKEDGSYLIPNLPNGDYRVEFSNLPKGYEVTPSKQGNNEELDSNGLSSVITVNGKDNLSADLGIYKPKYNLGDYVWEDTNKNGIQDQDEKGISGVTVTLKDENGNVLKTVTTDADGKYKFTDLDNGNYKVEFTTPEGYTPTTVTSGSDIEKDSNGLTTTGVINGADNMTLDSGFYKTPKYNLGNYVWEDTNKDGKQDSTEKGISGVTVTLKNENGEVLQTTKTDKDGKYQFTGLENGTYKVEFETPSGYTPTQVGSGTDEGIDSNGTSTTGVIKDKDNDTIDSGFYKPTYNLGDYVWEDTNKNGVQDKDEKGISGVTVTLKDENDKVLKTVTTDENGKYQFTDLNNGTYKVEFETPSGYTPTSVTSGNDTEKDSNGLTTTGVIKDADNMTLDSGFYKTPKYSLGDYVWYDSNKDGKQDSTEKGIKDVKVTLLNEKGEVIGTTKTDENGKYRFDNLDSGKYKVIFEKPAGLTQTGTNTTEDDKDADGGEVDVTITDHDDFTLDNGYFEEDTSDSDSDSDSDSDSDSDSDSDSDSDSDSDSDSDSDSDSDSDSDSDSDSDSDSDSDSDSDSDSDSDSDSDSDSDSDSDSDSDSDSDSDSDSDSDSDSDSDSDSESDSDSDSDSDSDSDSDSDSDSDSDSDSDSDSDSDSDSDSDSDSDSDSDSDSDSDSDSDSDSDSDSDSDSDSDSDSDSDSDAGKHTPVKPMSTTKDHHNKAKALPETGNENSGSNNATLFGGLFAALGSLLLFGRRKKQNK</sequence>
<gene>
    <name type="primary">sdrD</name>
    <name type="ordered locus">SAS0520</name>
</gene>
<reference key="1">
    <citation type="journal article" date="2004" name="Proc. Natl. Acad. Sci. U.S.A.">
        <title>Complete genomes of two clinical Staphylococcus aureus strains: evidence for the rapid evolution of virulence and drug resistance.</title>
        <authorList>
            <person name="Holden M.T.G."/>
            <person name="Feil E.J."/>
            <person name="Lindsay J.A."/>
            <person name="Peacock S.J."/>
            <person name="Day N.P.J."/>
            <person name="Enright M.C."/>
            <person name="Foster T.J."/>
            <person name="Moore C.E."/>
            <person name="Hurst L."/>
            <person name="Atkin R."/>
            <person name="Barron A."/>
            <person name="Bason N."/>
            <person name="Bentley S.D."/>
            <person name="Chillingworth C."/>
            <person name="Chillingworth T."/>
            <person name="Churcher C."/>
            <person name="Clark L."/>
            <person name="Corton C."/>
            <person name="Cronin A."/>
            <person name="Doggett J."/>
            <person name="Dowd L."/>
            <person name="Feltwell T."/>
            <person name="Hance Z."/>
            <person name="Harris B."/>
            <person name="Hauser H."/>
            <person name="Holroyd S."/>
            <person name="Jagels K."/>
            <person name="James K.D."/>
            <person name="Lennard N."/>
            <person name="Line A."/>
            <person name="Mayes R."/>
            <person name="Moule S."/>
            <person name="Mungall K."/>
            <person name="Ormond D."/>
            <person name="Quail M.A."/>
            <person name="Rabbinowitsch E."/>
            <person name="Rutherford K.M."/>
            <person name="Sanders M."/>
            <person name="Sharp S."/>
            <person name="Simmonds M."/>
            <person name="Stevens K."/>
            <person name="Whitehead S."/>
            <person name="Barrell B.G."/>
            <person name="Spratt B.G."/>
            <person name="Parkhill J."/>
        </authorList>
    </citation>
    <scope>NUCLEOTIDE SEQUENCE [LARGE SCALE GENOMIC DNA]</scope>
    <source>
        <strain>MSSA476</strain>
    </source>
</reference>
<proteinExistence type="inferred from homology"/>
<keyword id="KW-0106">Calcium</keyword>
<keyword id="KW-0134">Cell wall</keyword>
<keyword id="KW-0572">Peptidoglycan-anchor</keyword>
<keyword id="KW-0677">Repeat</keyword>
<keyword id="KW-0964">Secreted</keyword>
<keyword id="KW-0732">Signal</keyword>
<dbReference type="EMBL" id="BX571857">
    <property type="protein sequence ID" value="CAG42295.1"/>
    <property type="molecule type" value="Genomic_DNA"/>
</dbReference>
<dbReference type="RefSeq" id="WP_000934439.1">
    <property type="nucleotide sequence ID" value="NC_002953.3"/>
</dbReference>
<dbReference type="SMR" id="Q6GBS5"/>
<dbReference type="KEGG" id="sas:SAS0520"/>
<dbReference type="HOGENOM" id="CLU_004137_0_1_9"/>
<dbReference type="PRO" id="PR:Q6GBS5"/>
<dbReference type="GO" id="GO:0005576">
    <property type="term" value="C:extracellular region"/>
    <property type="evidence" value="ECO:0007669"/>
    <property type="project" value="UniProtKB-KW"/>
</dbReference>
<dbReference type="GO" id="GO:0007155">
    <property type="term" value="P:cell adhesion"/>
    <property type="evidence" value="ECO:0007669"/>
    <property type="project" value="InterPro"/>
</dbReference>
<dbReference type="Gene3D" id="2.60.40.1280">
    <property type="match status" value="1"/>
</dbReference>
<dbReference type="Gene3D" id="2.60.40.1290">
    <property type="match status" value="1"/>
</dbReference>
<dbReference type="Gene3D" id="2.60.40.10">
    <property type="entry name" value="Immunoglobulins"/>
    <property type="match status" value="5"/>
</dbReference>
<dbReference type="InterPro" id="IPR011266">
    <property type="entry name" value="Adhesin_Fg-bd_dom_2"/>
</dbReference>
<dbReference type="InterPro" id="IPR008966">
    <property type="entry name" value="Adhesion_dom_sf"/>
</dbReference>
<dbReference type="InterPro" id="IPR011252">
    <property type="entry name" value="Fibrogen-bd_dom1"/>
</dbReference>
<dbReference type="InterPro" id="IPR013783">
    <property type="entry name" value="Ig-like_fold"/>
</dbReference>
<dbReference type="InterPro" id="IPR019931">
    <property type="entry name" value="LPXTG_anchor"/>
</dbReference>
<dbReference type="InterPro" id="IPR050972">
    <property type="entry name" value="SDr-like"/>
</dbReference>
<dbReference type="InterPro" id="IPR033764">
    <property type="entry name" value="Sdr_B"/>
</dbReference>
<dbReference type="InterPro" id="IPR041171">
    <property type="entry name" value="SDR_Ig"/>
</dbReference>
<dbReference type="InterPro" id="IPR005877">
    <property type="entry name" value="YSIRK_signal_dom"/>
</dbReference>
<dbReference type="NCBIfam" id="TIGR01167">
    <property type="entry name" value="LPXTG_anchor"/>
    <property type="match status" value="1"/>
</dbReference>
<dbReference type="NCBIfam" id="NF012181">
    <property type="entry name" value="MSCRAMM_SdrD"/>
    <property type="match status" value="1"/>
</dbReference>
<dbReference type="NCBIfam" id="TIGR01168">
    <property type="entry name" value="YSIRK_signal"/>
    <property type="match status" value="1"/>
</dbReference>
<dbReference type="PANTHER" id="PTHR34403">
    <property type="entry name" value="TOL-PAL SYSTEM PROTEIN TOLA"/>
    <property type="match status" value="1"/>
</dbReference>
<dbReference type="PANTHER" id="PTHR34403:SF8">
    <property type="entry name" value="TOL-PAL SYSTEM PROTEIN TOLA"/>
    <property type="match status" value="1"/>
</dbReference>
<dbReference type="Pfam" id="PF17961">
    <property type="entry name" value="Big_8"/>
    <property type="match status" value="1"/>
</dbReference>
<dbReference type="Pfam" id="PF00746">
    <property type="entry name" value="Gram_pos_anchor"/>
    <property type="match status" value="1"/>
</dbReference>
<dbReference type="Pfam" id="PF17210">
    <property type="entry name" value="SdrD_B"/>
    <property type="match status" value="5"/>
</dbReference>
<dbReference type="Pfam" id="PF10425">
    <property type="entry name" value="SdrG_C_C"/>
    <property type="match status" value="1"/>
</dbReference>
<dbReference type="Pfam" id="PF04650">
    <property type="entry name" value="YSIRK_signal"/>
    <property type="match status" value="1"/>
</dbReference>
<dbReference type="SUPFAM" id="SSF49401">
    <property type="entry name" value="Bacterial adhesins"/>
    <property type="match status" value="2"/>
</dbReference>
<dbReference type="SUPFAM" id="SSF117074">
    <property type="entry name" value="Hypothetical protein PA1324"/>
    <property type="match status" value="5"/>
</dbReference>
<dbReference type="PROSITE" id="PS50847">
    <property type="entry name" value="GRAM_POS_ANCHORING"/>
    <property type="match status" value="1"/>
</dbReference>